<organism>
    <name type="scientific">Rhizobium meliloti (strain 1021)</name>
    <name type="common">Ensifer meliloti</name>
    <name type="synonym">Sinorhizobium meliloti</name>
    <dbReference type="NCBI Taxonomy" id="266834"/>
    <lineage>
        <taxon>Bacteria</taxon>
        <taxon>Pseudomonadati</taxon>
        <taxon>Pseudomonadota</taxon>
        <taxon>Alphaproteobacteria</taxon>
        <taxon>Hyphomicrobiales</taxon>
        <taxon>Rhizobiaceae</taxon>
        <taxon>Sinorhizobium/Ensifer group</taxon>
        <taxon>Sinorhizobium</taxon>
    </lineage>
</organism>
<reference key="1">
    <citation type="journal article" date="2002" name="Mol. Microbiol.">
        <title>Identification of a gene required for the biosynthesis of ornithine-derived lipids.</title>
        <authorList>
            <person name="Weissenmayer B."/>
            <person name="Gao J.L."/>
            <person name="Lopez-Lara I.M."/>
            <person name="Geiger O."/>
        </authorList>
    </citation>
    <scope>NUCLEOTIDE SEQUENCE [GENOMIC DNA]</scope>
    <scope>FUNCTION</scope>
    <scope>CATALYTIC ACTIVITY</scope>
    <scope>PATHWAY</scope>
    <scope>DISRUPTION PHENOTYPE</scope>
    <source>
        <strain>1021</strain>
    </source>
</reference>
<reference key="2">
    <citation type="journal article" date="2001" name="Proc. Natl. Acad. Sci. U.S.A.">
        <title>Analysis of the chromosome sequence of the legume symbiont Sinorhizobium meliloti strain 1021.</title>
        <authorList>
            <person name="Capela D."/>
            <person name="Barloy-Hubler F."/>
            <person name="Gouzy J."/>
            <person name="Bothe G."/>
            <person name="Ampe F."/>
            <person name="Batut J."/>
            <person name="Boistard P."/>
            <person name="Becker A."/>
            <person name="Boutry M."/>
            <person name="Cadieu E."/>
            <person name="Dreano S."/>
            <person name="Gloux S."/>
            <person name="Godrie T."/>
            <person name="Goffeau A."/>
            <person name="Kahn D."/>
            <person name="Kiss E."/>
            <person name="Lelaure V."/>
            <person name="Masuy D."/>
            <person name="Pohl T."/>
            <person name="Portetelle D."/>
            <person name="Puehler A."/>
            <person name="Purnelle B."/>
            <person name="Ramsperger U."/>
            <person name="Renard C."/>
            <person name="Thebault P."/>
            <person name="Vandenbol M."/>
            <person name="Weidner S."/>
            <person name="Galibert F."/>
        </authorList>
    </citation>
    <scope>NUCLEOTIDE SEQUENCE [LARGE SCALE GENOMIC DNA]</scope>
    <source>
        <strain>1021</strain>
    </source>
</reference>
<reference key="3">
    <citation type="journal article" date="2001" name="Science">
        <title>The composite genome of the legume symbiont Sinorhizobium meliloti.</title>
        <authorList>
            <person name="Galibert F."/>
            <person name="Finan T.M."/>
            <person name="Long S.R."/>
            <person name="Puehler A."/>
            <person name="Abola P."/>
            <person name="Ampe F."/>
            <person name="Barloy-Hubler F."/>
            <person name="Barnett M.J."/>
            <person name="Becker A."/>
            <person name="Boistard P."/>
            <person name="Bothe G."/>
            <person name="Boutry M."/>
            <person name="Bowser L."/>
            <person name="Buhrmester J."/>
            <person name="Cadieu E."/>
            <person name="Capela D."/>
            <person name="Chain P."/>
            <person name="Cowie A."/>
            <person name="Davis R.W."/>
            <person name="Dreano S."/>
            <person name="Federspiel N.A."/>
            <person name="Fisher R.F."/>
            <person name="Gloux S."/>
            <person name="Godrie T."/>
            <person name="Goffeau A."/>
            <person name="Golding B."/>
            <person name="Gouzy J."/>
            <person name="Gurjal M."/>
            <person name="Hernandez-Lucas I."/>
            <person name="Hong A."/>
            <person name="Huizar L."/>
            <person name="Hyman R.W."/>
            <person name="Jones T."/>
            <person name="Kahn D."/>
            <person name="Kahn M.L."/>
            <person name="Kalman S."/>
            <person name="Keating D.H."/>
            <person name="Kiss E."/>
            <person name="Komp C."/>
            <person name="Lelaure V."/>
            <person name="Masuy D."/>
            <person name="Palm C."/>
            <person name="Peck M.C."/>
            <person name="Pohl T.M."/>
            <person name="Portetelle D."/>
            <person name="Purnelle B."/>
            <person name="Ramsperger U."/>
            <person name="Surzycki R."/>
            <person name="Thebault P."/>
            <person name="Vandenbol M."/>
            <person name="Vorhoelter F.J."/>
            <person name="Weidner S."/>
            <person name="Wells D.H."/>
            <person name="Wong K."/>
            <person name="Yeh K.-C."/>
            <person name="Batut J."/>
        </authorList>
    </citation>
    <scope>NUCLEOTIDE SEQUENCE [LARGE SCALE GENOMIC DNA]</scope>
    <source>
        <strain>1021</strain>
    </source>
</reference>
<name>OLSA_RHIME</name>
<gene>
    <name evidence="4" type="primary">olsA</name>
    <name evidence="5" type="ordered locus">R00404</name>
    <name evidence="6" type="ORF">SMc01116</name>
</gene>
<evidence type="ECO:0000255" key="1"/>
<evidence type="ECO:0000256" key="2">
    <source>
        <dbReference type="SAM" id="MobiDB-lite"/>
    </source>
</evidence>
<evidence type="ECO:0000269" key="3">
    <source>
    </source>
</evidence>
<evidence type="ECO:0000303" key="4">
    <source>
    </source>
</evidence>
<evidence type="ECO:0000305" key="5"/>
<evidence type="ECO:0000312" key="6">
    <source>
        <dbReference type="EMBL" id="CAC41841.1"/>
    </source>
</evidence>
<sequence>MINWVRVALCGMLLVMVSLVLMPVQILCLWLDLKPRRWLPRHWHRVACLLLGLRVRVHGELDRRRPLLLSANHVSWKDILVLSSVADVVFVAKSDVKSWPIFGLLARLQASVFVEREQKRTTGHQVNDIGRRLADGEIVVLFPEGTTSDGNRLLDIKTSLFGAAASAVPQSPTGVVHVQPLAISYTGIHGMPMGRYHRPIAAWPGDIGLVPHLLGVLREGALEVDVDFGEAVDYDRHANRKEVSRLIGQRIRKMLSDRLRGRSRSAAKGEPAPACSAAPDIPSDAQRSRLAP</sequence>
<proteinExistence type="evidence at protein level"/>
<feature type="chain" id="PRO_0000452117" description="Lyso-ornithine lipid O-acyltransferase">
    <location>
        <begin position="1"/>
        <end position="292"/>
    </location>
</feature>
<feature type="transmembrane region" description="Helical" evidence="1">
    <location>
        <begin position="11"/>
        <end position="31"/>
    </location>
</feature>
<feature type="region of interest" description="Disordered" evidence="2">
    <location>
        <begin position="258"/>
        <end position="292"/>
    </location>
</feature>
<protein>
    <recommendedName>
        <fullName evidence="5">Lyso-ornithine lipid O-acyltransferase</fullName>
        <ecNumber evidence="3">2.3.1.270</ecNumber>
    </recommendedName>
    <alternativeName>
        <fullName evidence="5">Ornithine lipid synthesis protein A</fullName>
    </alternativeName>
</protein>
<keyword id="KW-0012">Acyltransferase</keyword>
<keyword id="KW-0444">Lipid biosynthesis</keyword>
<keyword id="KW-0443">Lipid metabolism</keyword>
<keyword id="KW-0472">Membrane</keyword>
<keyword id="KW-1185">Reference proteome</keyword>
<keyword id="KW-0808">Transferase</keyword>
<keyword id="KW-0812">Transmembrane</keyword>
<keyword id="KW-1133">Transmembrane helix</keyword>
<comment type="function">
    <text evidence="3">Catalyzes the second step in the formation of ornithine lipids, which are phosphorus-free membrane lipids. Uses acyl-acyl carrier protein (acyl-AcpP) as an acyl donor and converts lyso-ornithine lipid (LOL) into ornithine lipid (OL).</text>
</comment>
<comment type="catalytic activity">
    <reaction evidence="3">
        <text>a lyso-ornithine lipid + a fatty acyl-[ACP] = an N(2)-[(3R)-3-(acyloxy)acyl]-L-ornithine lipid + holo-[ACP]</text>
        <dbReference type="Rhea" id="RHEA:55760"/>
        <dbReference type="Rhea" id="RHEA-COMP:9685"/>
        <dbReference type="Rhea" id="RHEA-COMP:14125"/>
        <dbReference type="ChEBI" id="CHEBI:64479"/>
        <dbReference type="ChEBI" id="CHEBI:138482"/>
        <dbReference type="ChEBI" id="CHEBI:138651"/>
        <dbReference type="ChEBI" id="CHEBI:140663"/>
        <dbReference type="EC" id="2.3.1.270"/>
    </reaction>
    <physiologicalReaction direction="left-to-right" evidence="3">
        <dbReference type="Rhea" id="RHEA:55761"/>
    </physiologicalReaction>
</comment>
<comment type="pathway">
    <text evidence="3">Lipid metabolism.</text>
</comment>
<comment type="subcellular location">
    <subcellularLocation>
        <location evidence="1">Membrane</location>
        <topology evidence="1">Single-pass membrane protein</topology>
    </subcellularLocation>
</comment>
<comment type="disruption phenotype">
    <text evidence="3">Disruption mutant is deficient in the biosynthesis of ornithine-derived lipids. It can still induce nitrogen-fixing nodules on legume hosts, but it shows delayed nodulation if compared to the wild type.</text>
</comment>
<comment type="similarity">
    <text evidence="5">Belongs to the 1-acyl-sn-glycerol-3-phosphate acyltransferase family. OlsA subfamily.</text>
</comment>
<accession>Q7APG1</accession>
<dbReference type="EC" id="2.3.1.270" evidence="3"/>
<dbReference type="EMBL" id="AL591688">
    <property type="protein sequence ID" value="CAC41841.1"/>
    <property type="molecule type" value="Genomic_DNA"/>
</dbReference>
<dbReference type="RefSeq" id="NP_384510.1">
    <property type="nucleotide sequence ID" value="NC_003047.1"/>
</dbReference>
<dbReference type="RefSeq" id="WP_003527683.1">
    <property type="nucleotide sequence ID" value="NC_003047.1"/>
</dbReference>
<dbReference type="SMR" id="Q7APG1"/>
<dbReference type="EnsemblBacteria" id="CAC41841">
    <property type="protein sequence ID" value="CAC41841"/>
    <property type="gene ID" value="SMc01116"/>
</dbReference>
<dbReference type="KEGG" id="sme:SMc01116"/>
<dbReference type="PATRIC" id="fig|266834.11.peg.1777"/>
<dbReference type="eggNOG" id="COG0204">
    <property type="taxonomic scope" value="Bacteria"/>
</dbReference>
<dbReference type="HOGENOM" id="CLU_027938_0_1_5"/>
<dbReference type="OrthoDB" id="9806880at2"/>
<dbReference type="Proteomes" id="UP000001976">
    <property type="component" value="Chromosome"/>
</dbReference>
<dbReference type="GO" id="GO:0016020">
    <property type="term" value="C:membrane"/>
    <property type="evidence" value="ECO:0007669"/>
    <property type="project" value="UniProtKB-SubCell"/>
</dbReference>
<dbReference type="GO" id="GO:0016746">
    <property type="term" value="F:acyltransferase activity"/>
    <property type="evidence" value="ECO:0007669"/>
    <property type="project" value="UniProtKB-KW"/>
</dbReference>
<dbReference type="GO" id="GO:0006629">
    <property type="term" value="P:lipid metabolic process"/>
    <property type="evidence" value="ECO:0007669"/>
    <property type="project" value="UniProtKB-KW"/>
</dbReference>
<dbReference type="CDD" id="cd07989">
    <property type="entry name" value="LPLAT_AGPAT-like"/>
    <property type="match status" value="1"/>
</dbReference>
<dbReference type="InterPro" id="IPR002123">
    <property type="entry name" value="Plipid/glycerol_acylTrfase"/>
</dbReference>
<dbReference type="PANTHER" id="PTHR23063:SF52">
    <property type="entry name" value="LYSOPHOSPHATIDYLCHOLINE ACYLTRANSFERASE"/>
    <property type="match status" value="1"/>
</dbReference>
<dbReference type="PANTHER" id="PTHR23063">
    <property type="entry name" value="PHOSPHOLIPID ACYLTRANSFERASE"/>
    <property type="match status" value="1"/>
</dbReference>
<dbReference type="Pfam" id="PF01553">
    <property type="entry name" value="Acyltransferase"/>
    <property type="match status" value="1"/>
</dbReference>
<dbReference type="SMART" id="SM00563">
    <property type="entry name" value="PlsC"/>
    <property type="match status" value="1"/>
</dbReference>
<dbReference type="SUPFAM" id="SSF69593">
    <property type="entry name" value="Glycerol-3-phosphate (1)-acyltransferase"/>
    <property type="match status" value="1"/>
</dbReference>